<keyword id="KW-0119">Carbohydrate metabolism</keyword>
<keyword id="KW-0963">Cytoplasm</keyword>
<keyword id="KW-0378">Hydrolase</keyword>
<keyword id="KW-0460">Magnesium</keyword>
<keyword id="KW-0479">Metal-binding</keyword>
<keyword id="KW-1185">Reference proteome</keyword>
<sequence>MHSNPFLTQFILEEQRSIPSATGDFTGLLNDIVTACKTISHLVNRGGLIDILGAAGTENIQGEGQKKLDVISNDIMVNSLEWTGHLGAMASEEIEGIIPIPGQYPKGKYLLLFDPLDGSSNIDINISVGTIFSILRCPDDVSEPTQEDFLQPGTQQVCAGFCVYGPTTMMVLTAGHGVNGFTLDQDIGEFILTHPNMTIPEDTMEFAINMSNQRFWAAPVQRYIEDCLQGKEGCRNKNFNMRWVASMVSEVYRILTRGGIFMYPWDSRDPDKPGRLRLMYEANPMSFIVEQAGGVSSTGDQRILEINPEGIHQRVPVILGSKNEVERVIAYHQEA</sequence>
<feature type="chain" id="PRO_0000364615" description="Fructose-1,6-bisphosphatase class 1">
    <location>
        <begin position="1"/>
        <end position="335"/>
    </location>
</feature>
<feature type="binding site" evidence="1">
    <location>
        <position position="92"/>
    </location>
    <ligand>
        <name>Mg(2+)</name>
        <dbReference type="ChEBI" id="CHEBI:18420"/>
        <label>1</label>
    </ligand>
</feature>
<feature type="binding site" evidence="1">
    <location>
        <position position="114"/>
    </location>
    <ligand>
        <name>Mg(2+)</name>
        <dbReference type="ChEBI" id="CHEBI:18420"/>
        <label>1</label>
    </ligand>
</feature>
<feature type="binding site" evidence="1">
    <location>
        <position position="114"/>
    </location>
    <ligand>
        <name>Mg(2+)</name>
        <dbReference type="ChEBI" id="CHEBI:18420"/>
        <label>2</label>
    </ligand>
</feature>
<feature type="binding site" evidence="1">
    <location>
        <position position="116"/>
    </location>
    <ligand>
        <name>Mg(2+)</name>
        <dbReference type="ChEBI" id="CHEBI:18420"/>
        <label>1</label>
    </ligand>
</feature>
<feature type="binding site" evidence="1">
    <location>
        <begin position="117"/>
        <end position="120"/>
    </location>
    <ligand>
        <name>substrate</name>
    </ligand>
</feature>
<feature type="binding site" evidence="1">
    <location>
        <position position="117"/>
    </location>
    <ligand>
        <name>Mg(2+)</name>
        <dbReference type="ChEBI" id="CHEBI:18420"/>
        <label>2</label>
    </ligand>
</feature>
<feature type="binding site" evidence="1">
    <location>
        <position position="209"/>
    </location>
    <ligand>
        <name>substrate</name>
    </ligand>
</feature>
<feature type="binding site" evidence="1">
    <location>
        <position position="281"/>
    </location>
    <ligand>
        <name>Mg(2+)</name>
        <dbReference type="ChEBI" id="CHEBI:18420"/>
        <label>2</label>
    </ligand>
</feature>
<proteinExistence type="inferred from homology"/>
<comment type="catalytic activity">
    <reaction evidence="1">
        <text>beta-D-fructose 1,6-bisphosphate + H2O = beta-D-fructose 6-phosphate + phosphate</text>
        <dbReference type="Rhea" id="RHEA:11064"/>
        <dbReference type="ChEBI" id="CHEBI:15377"/>
        <dbReference type="ChEBI" id="CHEBI:32966"/>
        <dbReference type="ChEBI" id="CHEBI:43474"/>
        <dbReference type="ChEBI" id="CHEBI:57634"/>
        <dbReference type="EC" id="3.1.3.11"/>
    </reaction>
</comment>
<comment type="cofactor">
    <cofactor evidence="1">
        <name>Mg(2+)</name>
        <dbReference type="ChEBI" id="CHEBI:18420"/>
    </cofactor>
    <text evidence="1">Binds 2 magnesium ions per subunit.</text>
</comment>
<comment type="pathway">
    <text evidence="1">Carbohydrate biosynthesis; gluconeogenesis.</text>
</comment>
<comment type="subunit">
    <text evidence="1">Homotetramer.</text>
</comment>
<comment type="subcellular location">
    <subcellularLocation>
        <location evidence="1">Cytoplasm</location>
    </subcellularLocation>
</comment>
<comment type="similarity">
    <text evidence="1">Belongs to the FBPase class 1 family.</text>
</comment>
<reference key="1">
    <citation type="journal article" date="2006" name="Appl. Environ. Microbiol.">
        <title>Complete genome sequence of the marine, chemolithoautotrophic, ammonia-oxidizing bacterium Nitrosococcus oceani ATCC 19707.</title>
        <authorList>
            <person name="Klotz M.G."/>
            <person name="Arp D.J."/>
            <person name="Chain P.S.G."/>
            <person name="El-Sheikh A.F."/>
            <person name="Hauser L.J."/>
            <person name="Hommes N.G."/>
            <person name="Larimer F.W."/>
            <person name="Malfatti S.A."/>
            <person name="Norton J.M."/>
            <person name="Poret-Peterson A.T."/>
            <person name="Vergez L.M."/>
            <person name="Ward B.B."/>
        </authorList>
    </citation>
    <scope>NUCLEOTIDE SEQUENCE [LARGE SCALE GENOMIC DNA]</scope>
    <source>
        <strain>ATCC 19707 / BCRC 17464 / JCM 30415 / NCIMB 11848 / C-107</strain>
    </source>
</reference>
<protein>
    <recommendedName>
        <fullName evidence="1">Fructose-1,6-bisphosphatase class 1</fullName>
        <shortName evidence="1">FBPase class 1</shortName>
        <ecNumber evidence="1">3.1.3.11</ecNumber>
    </recommendedName>
    <alternativeName>
        <fullName evidence="1">D-fructose-1,6-bisphosphate 1-phosphohydrolase class 1</fullName>
    </alternativeName>
</protein>
<evidence type="ECO:0000255" key="1">
    <source>
        <dbReference type="HAMAP-Rule" id="MF_01855"/>
    </source>
</evidence>
<organism>
    <name type="scientific">Nitrosococcus oceani (strain ATCC 19707 / BCRC 17464 / JCM 30415 / NCIMB 11848 / C-107)</name>
    <dbReference type="NCBI Taxonomy" id="323261"/>
    <lineage>
        <taxon>Bacteria</taxon>
        <taxon>Pseudomonadati</taxon>
        <taxon>Pseudomonadota</taxon>
        <taxon>Gammaproteobacteria</taxon>
        <taxon>Chromatiales</taxon>
        <taxon>Chromatiaceae</taxon>
        <taxon>Nitrosococcus</taxon>
    </lineage>
</organism>
<accession>Q3JF33</accession>
<gene>
    <name evidence="1" type="primary">fbp</name>
    <name type="ordered locus">Noc_0021</name>
</gene>
<name>F16PA_NITOC</name>
<dbReference type="EC" id="3.1.3.11" evidence="1"/>
<dbReference type="EMBL" id="CP000127">
    <property type="protein sequence ID" value="ABA56563.1"/>
    <property type="molecule type" value="Genomic_DNA"/>
</dbReference>
<dbReference type="RefSeq" id="WP_002813313.1">
    <property type="nucleotide sequence ID" value="NC_007484.1"/>
</dbReference>
<dbReference type="SMR" id="Q3JF33"/>
<dbReference type="FunCoup" id="Q3JF33">
    <property type="interactions" value="428"/>
</dbReference>
<dbReference type="STRING" id="323261.Noc_0021"/>
<dbReference type="KEGG" id="noc:Noc_0021"/>
<dbReference type="eggNOG" id="COG0158">
    <property type="taxonomic scope" value="Bacteria"/>
</dbReference>
<dbReference type="HOGENOM" id="CLU_039977_0_0_6"/>
<dbReference type="InParanoid" id="Q3JF33"/>
<dbReference type="UniPathway" id="UPA00138"/>
<dbReference type="Proteomes" id="UP000006838">
    <property type="component" value="Chromosome"/>
</dbReference>
<dbReference type="GO" id="GO:0005829">
    <property type="term" value="C:cytosol"/>
    <property type="evidence" value="ECO:0007669"/>
    <property type="project" value="TreeGrafter"/>
</dbReference>
<dbReference type="GO" id="GO:0042132">
    <property type="term" value="F:fructose 1,6-bisphosphate 1-phosphatase activity"/>
    <property type="evidence" value="ECO:0007669"/>
    <property type="project" value="UniProtKB-UniRule"/>
</dbReference>
<dbReference type="GO" id="GO:0000287">
    <property type="term" value="F:magnesium ion binding"/>
    <property type="evidence" value="ECO:0007669"/>
    <property type="project" value="UniProtKB-UniRule"/>
</dbReference>
<dbReference type="GO" id="GO:0030388">
    <property type="term" value="P:fructose 1,6-bisphosphate metabolic process"/>
    <property type="evidence" value="ECO:0007669"/>
    <property type="project" value="TreeGrafter"/>
</dbReference>
<dbReference type="GO" id="GO:0006002">
    <property type="term" value="P:fructose 6-phosphate metabolic process"/>
    <property type="evidence" value="ECO:0007669"/>
    <property type="project" value="TreeGrafter"/>
</dbReference>
<dbReference type="GO" id="GO:0006000">
    <property type="term" value="P:fructose metabolic process"/>
    <property type="evidence" value="ECO:0007669"/>
    <property type="project" value="TreeGrafter"/>
</dbReference>
<dbReference type="GO" id="GO:0006094">
    <property type="term" value="P:gluconeogenesis"/>
    <property type="evidence" value="ECO:0007669"/>
    <property type="project" value="UniProtKB-UniRule"/>
</dbReference>
<dbReference type="GO" id="GO:0005986">
    <property type="term" value="P:sucrose biosynthetic process"/>
    <property type="evidence" value="ECO:0007669"/>
    <property type="project" value="TreeGrafter"/>
</dbReference>
<dbReference type="CDD" id="cd00354">
    <property type="entry name" value="FBPase"/>
    <property type="match status" value="1"/>
</dbReference>
<dbReference type="FunFam" id="3.30.540.10:FF:000002">
    <property type="entry name" value="Fructose-1,6-bisphosphatase class 1"/>
    <property type="match status" value="1"/>
</dbReference>
<dbReference type="FunFam" id="3.40.190.80:FF:000011">
    <property type="entry name" value="Fructose-1,6-bisphosphatase class 1"/>
    <property type="match status" value="1"/>
</dbReference>
<dbReference type="Gene3D" id="3.40.190.80">
    <property type="match status" value="1"/>
</dbReference>
<dbReference type="Gene3D" id="3.30.540.10">
    <property type="entry name" value="Fructose-1,6-Bisphosphatase, subunit A, domain 1"/>
    <property type="match status" value="1"/>
</dbReference>
<dbReference type="HAMAP" id="MF_01855">
    <property type="entry name" value="FBPase_class1"/>
    <property type="match status" value="1"/>
</dbReference>
<dbReference type="InterPro" id="IPR044015">
    <property type="entry name" value="FBPase_C_dom"/>
</dbReference>
<dbReference type="InterPro" id="IPR000146">
    <property type="entry name" value="FBPase_class-1"/>
</dbReference>
<dbReference type="InterPro" id="IPR033391">
    <property type="entry name" value="FBPase_N"/>
</dbReference>
<dbReference type="InterPro" id="IPR028343">
    <property type="entry name" value="FBPtase"/>
</dbReference>
<dbReference type="NCBIfam" id="NF006778">
    <property type="entry name" value="PRK09293.1-1"/>
    <property type="match status" value="1"/>
</dbReference>
<dbReference type="NCBIfam" id="NF006779">
    <property type="entry name" value="PRK09293.1-3"/>
    <property type="match status" value="1"/>
</dbReference>
<dbReference type="NCBIfam" id="NF006780">
    <property type="entry name" value="PRK09293.1-4"/>
    <property type="match status" value="1"/>
</dbReference>
<dbReference type="PANTHER" id="PTHR11556">
    <property type="entry name" value="FRUCTOSE-1,6-BISPHOSPHATASE-RELATED"/>
    <property type="match status" value="1"/>
</dbReference>
<dbReference type="PANTHER" id="PTHR11556:SF35">
    <property type="entry name" value="SEDOHEPTULOSE-1,7-BISPHOSPHATASE, CHLOROPLASTIC"/>
    <property type="match status" value="1"/>
</dbReference>
<dbReference type="Pfam" id="PF00316">
    <property type="entry name" value="FBPase"/>
    <property type="match status" value="1"/>
</dbReference>
<dbReference type="Pfam" id="PF18913">
    <property type="entry name" value="FBPase_C"/>
    <property type="match status" value="1"/>
</dbReference>
<dbReference type="PIRSF" id="PIRSF500210">
    <property type="entry name" value="FBPtase"/>
    <property type="match status" value="1"/>
</dbReference>
<dbReference type="PIRSF" id="PIRSF000904">
    <property type="entry name" value="FBPtase_SBPase"/>
    <property type="match status" value="1"/>
</dbReference>
<dbReference type="PRINTS" id="PR00115">
    <property type="entry name" value="F16BPHPHTASE"/>
</dbReference>
<dbReference type="SUPFAM" id="SSF56655">
    <property type="entry name" value="Carbohydrate phosphatase"/>
    <property type="match status" value="1"/>
</dbReference>